<comment type="subcellular location">
    <subcellularLocation>
        <location evidence="3">Membrane</location>
        <topology evidence="3">Single-pass membrane protein</topology>
    </subcellularLocation>
</comment>
<evidence type="ECO:0000255" key="1"/>
<evidence type="ECO:0000256" key="2">
    <source>
        <dbReference type="SAM" id="MobiDB-lite"/>
    </source>
</evidence>
<evidence type="ECO:0000305" key="3"/>
<organism>
    <name type="scientific">Mycobacterium tuberculosis (strain ATCC 25618 / H37Rv)</name>
    <dbReference type="NCBI Taxonomy" id="83332"/>
    <lineage>
        <taxon>Bacteria</taxon>
        <taxon>Bacillati</taxon>
        <taxon>Actinomycetota</taxon>
        <taxon>Actinomycetes</taxon>
        <taxon>Mycobacteriales</taxon>
        <taxon>Mycobacteriaceae</taxon>
        <taxon>Mycobacterium</taxon>
        <taxon>Mycobacterium tuberculosis complex</taxon>
    </lineage>
</organism>
<name>Y2091_MYCTU</name>
<protein>
    <recommendedName>
        <fullName>Uncharacterized protein Rv2091c</fullName>
    </recommendedName>
</protein>
<feature type="chain" id="PRO_0000103961" description="Uncharacterized protein Rv2091c">
    <location>
        <begin position="1"/>
        <end position="244"/>
    </location>
</feature>
<feature type="transmembrane region" description="Helical" evidence="1">
    <location>
        <begin position="136"/>
        <end position="156"/>
    </location>
</feature>
<feature type="region of interest" description="Disordered" evidence="2">
    <location>
        <begin position="1"/>
        <end position="127"/>
    </location>
</feature>
<feature type="compositionally biased region" description="Polar residues" evidence="2">
    <location>
        <begin position="34"/>
        <end position="43"/>
    </location>
</feature>
<feature type="compositionally biased region" description="Low complexity" evidence="2">
    <location>
        <begin position="45"/>
        <end position="75"/>
    </location>
</feature>
<feature type="compositionally biased region" description="Low complexity" evidence="2">
    <location>
        <begin position="88"/>
        <end position="127"/>
    </location>
</feature>
<dbReference type="EMBL" id="AL123456">
    <property type="protein sequence ID" value="CCP44866.1"/>
    <property type="molecule type" value="Genomic_DNA"/>
</dbReference>
<dbReference type="PIR" id="F70767">
    <property type="entry name" value="F70767"/>
</dbReference>
<dbReference type="RefSeq" id="NP_216607.1">
    <property type="nucleotide sequence ID" value="NC_000962.3"/>
</dbReference>
<dbReference type="RefSeq" id="WP_003410762.1">
    <property type="nucleotide sequence ID" value="NZ_NVQJ01000061.1"/>
</dbReference>
<dbReference type="SMR" id="P9WLJ5"/>
<dbReference type="STRING" id="83332.Rv2091c"/>
<dbReference type="PaxDb" id="83332-Rv2091c"/>
<dbReference type="DNASU" id="887469"/>
<dbReference type="GeneID" id="887469"/>
<dbReference type="KEGG" id="mtu:Rv2091c"/>
<dbReference type="KEGG" id="mtv:RVBD_2091c"/>
<dbReference type="TubercuList" id="Rv2091c"/>
<dbReference type="eggNOG" id="ENOG5033240">
    <property type="taxonomic scope" value="Bacteria"/>
</dbReference>
<dbReference type="InParanoid" id="P9WLJ5"/>
<dbReference type="OrthoDB" id="3625154at2"/>
<dbReference type="Proteomes" id="UP000001584">
    <property type="component" value="Chromosome"/>
</dbReference>
<dbReference type="GO" id="GO:0009274">
    <property type="term" value="C:peptidoglycan-based cell wall"/>
    <property type="evidence" value="ECO:0007005"/>
    <property type="project" value="MTBBASE"/>
</dbReference>
<dbReference type="GO" id="GO:0005886">
    <property type="term" value="C:plasma membrane"/>
    <property type="evidence" value="ECO:0007005"/>
    <property type="project" value="MTBBASE"/>
</dbReference>
<dbReference type="InterPro" id="IPR025637">
    <property type="entry name" value="DUF4333"/>
</dbReference>
<dbReference type="Pfam" id="PF14230">
    <property type="entry name" value="DUF4333"/>
    <property type="match status" value="1"/>
</dbReference>
<keyword id="KW-0472">Membrane</keyword>
<keyword id="KW-1185">Reference proteome</keyword>
<keyword id="KW-0812">Transmembrane</keyword>
<keyword id="KW-1133">Transmembrane helix</keyword>
<sequence>MSGPQGSDPRQPWQPPGQGADHSSDPTVAAGYPWQQQPTQEATWQAPAYTPQYQQPADPAYPQQYPQPTPGYAQPEQFGAQPTQLGVPGQYGQYQQPGQYGQPGQYGQPGQYAPPGQYPGQYGPYGQSGQGSKRSVAVIGGVIAVMAVLFIGAVLILGFWAPGFFVTTKLDVIKAQAGVQQVLTDETTGYGAKNVKDVKCNNGSDPTVKKGATFECTVSIDGTSKRVTVTFQDNKGTYEVGRPQ</sequence>
<reference key="1">
    <citation type="journal article" date="1998" name="Nature">
        <title>Deciphering the biology of Mycobacterium tuberculosis from the complete genome sequence.</title>
        <authorList>
            <person name="Cole S.T."/>
            <person name="Brosch R."/>
            <person name="Parkhill J."/>
            <person name="Garnier T."/>
            <person name="Churcher C.M."/>
            <person name="Harris D.E."/>
            <person name="Gordon S.V."/>
            <person name="Eiglmeier K."/>
            <person name="Gas S."/>
            <person name="Barry C.E. III"/>
            <person name="Tekaia F."/>
            <person name="Badcock K."/>
            <person name="Basham D."/>
            <person name="Brown D."/>
            <person name="Chillingworth T."/>
            <person name="Connor R."/>
            <person name="Davies R.M."/>
            <person name="Devlin K."/>
            <person name="Feltwell T."/>
            <person name="Gentles S."/>
            <person name="Hamlin N."/>
            <person name="Holroyd S."/>
            <person name="Hornsby T."/>
            <person name="Jagels K."/>
            <person name="Krogh A."/>
            <person name="McLean J."/>
            <person name="Moule S."/>
            <person name="Murphy L.D."/>
            <person name="Oliver S."/>
            <person name="Osborne J."/>
            <person name="Quail M.A."/>
            <person name="Rajandream M.A."/>
            <person name="Rogers J."/>
            <person name="Rutter S."/>
            <person name="Seeger K."/>
            <person name="Skelton S."/>
            <person name="Squares S."/>
            <person name="Squares R."/>
            <person name="Sulston J.E."/>
            <person name="Taylor K."/>
            <person name="Whitehead S."/>
            <person name="Barrell B.G."/>
        </authorList>
    </citation>
    <scope>NUCLEOTIDE SEQUENCE [LARGE SCALE GENOMIC DNA]</scope>
    <source>
        <strain>ATCC 25618 / H37Rv</strain>
    </source>
</reference>
<reference key="2">
    <citation type="journal article" date="2011" name="Mol. Cell. Proteomics">
        <title>Proteogenomic analysis of Mycobacterium tuberculosis by high resolution mass spectrometry.</title>
        <authorList>
            <person name="Kelkar D.S."/>
            <person name="Kumar D."/>
            <person name="Kumar P."/>
            <person name="Balakrishnan L."/>
            <person name="Muthusamy B."/>
            <person name="Yadav A.K."/>
            <person name="Shrivastava P."/>
            <person name="Marimuthu A."/>
            <person name="Anand S."/>
            <person name="Sundaram H."/>
            <person name="Kingsbury R."/>
            <person name="Harsha H.C."/>
            <person name="Nair B."/>
            <person name="Prasad T.S."/>
            <person name="Chauhan D.S."/>
            <person name="Katoch K."/>
            <person name="Katoch V.M."/>
            <person name="Kumar P."/>
            <person name="Chaerkady R."/>
            <person name="Ramachandran S."/>
            <person name="Dash D."/>
            <person name="Pandey A."/>
        </authorList>
    </citation>
    <scope>IDENTIFICATION BY MASS SPECTROMETRY [LARGE SCALE ANALYSIS]</scope>
    <source>
        <strain>ATCC 25618 / H37Rv</strain>
    </source>
</reference>
<accession>P9WLJ5</accession>
<accession>L0TA69</accession>
<accession>P64939</accession>
<accession>Q10700</accession>
<proteinExistence type="evidence at protein level"/>
<gene>
    <name type="ordered locus">Rv2091c</name>
    <name type="ORF">MTCY49.31c</name>
</gene>